<proteinExistence type="inferred from homology"/>
<keyword id="KW-0119">Carbohydrate metabolism</keyword>
<keyword id="KW-0963">Cytoplasm</keyword>
<keyword id="KW-0378">Hydrolase</keyword>
<keyword id="KW-0460">Magnesium</keyword>
<keyword id="KW-0479">Metal-binding</keyword>
<organism>
    <name type="scientific">Pseudomonas entomophila (strain L48)</name>
    <dbReference type="NCBI Taxonomy" id="384676"/>
    <lineage>
        <taxon>Bacteria</taxon>
        <taxon>Pseudomonadati</taxon>
        <taxon>Pseudomonadota</taxon>
        <taxon>Gammaproteobacteria</taxon>
        <taxon>Pseudomonadales</taxon>
        <taxon>Pseudomonadaceae</taxon>
        <taxon>Pseudomonas</taxon>
    </lineage>
</organism>
<accession>Q1I3Q0</accession>
<feature type="chain" id="PRO_0000364643" description="Fructose-1,6-bisphosphatase class 1">
    <location>
        <begin position="1"/>
        <end position="336"/>
    </location>
</feature>
<feature type="binding site" evidence="1">
    <location>
        <position position="90"/>
    </location>
    <ligand>
        <name>Mg(2+)</name>
        <dbReference type="ChEBI" id="CHEBI:18420"/>
        <label>1</label>
    </ligand>
</feature>
<feature type="binding site" evidence="1">
    <location>
        <position position="112"/>
    </location>
    <ligand>
        <name>Mg(2+)</name>
        <dbReference type="ChEBI" id="CHEBI:18420"/>
        <label>1</label>
    </ligand>
</feature>
<feature type="binding site" evidence="1">
    <location>
        <position position="112"/>
    </location>
    <ligand>
        <name>Mg(2+)</name>
        <dbReference type="ChEBI" id="CHEBI:18420"/>
        <label>2</label>
    </ligand>
</feature>
<feature type="binding site" evidence="1">
    <location>
        <position position="114"/>
    </location>
    <ligand>
        <name>Mg(2+)</name>
        <dbReference type="ChEBI" id="CHEBI:18420"/>
        <label>1</label>
    </ligand>
</feature>
<feature type="binding site" evidence="1">
    <location>
        <begin position="115"/>
        <end position="118"/>
    </location>
    <ligand>
        <name>substrate</name>
    </ligand>
</feature>
<feature type="binding site" evidence="1">
    <location>
        <position position="115"/>
    </location>
    <ligand>
        <name>Mg(2+)</name>
        <dbReference type="ChEBI" id="CHEBI:18420"/>
        <label>2</label>
    </ligand>
</feature>
<feature type="binding site" evidence="1">
    <location>
        <position position="211"/>
    </location>
    <ligand>
        <name>substrate</name>
    </ligand>
</feature>
<feature type="binding site" evidence="1">
    <location>
        <position position="277"/>
    </location>
    <ligand>
        <name>substrate</name>
    </ligand>
</feature>
<feature type="binding site" evidence="1">
    <location>
        <position position="283"/>
    </location>
    <ligand>
        <name>Mg(2+)</name>
        <dbReference type="ChEBI" id="CHEBI:18420"/>
        <label>2</label>
    </ligand>
</feature>
<protein>
    <recommendedName>
        <fullName evidence="1">Fructose-1,6-bisphosphatase class 1</fullName>
        <shortName evidence="1">FBPase class 1</shortName>
        <ecNumber evidence="1">3.1.3.11</ecNumber>
    </recommendedName>
    <alternativeName>
        <fullName evidence="1">D-fructose-1,6-bisphosphate 1-phosphohydrolase class 1</fullName>
    </alternativeName>
</protein>
<evidence type="ECO:0000255" key="1">
    <source>
        <dbReference type="HAMAP-Rule" id="MF_01855"/>
    </source>
</evidence>
<reference key="1">
    <citation type="journal article" date="2006" name="Nat. Biotechnol.">
        <title>Complete genome sequence of the entomopathogenic and metabolically versatile soil bacterium Pseudomonas entomophila.</title>
        <authorList>
            <person name="Vodovar N."/>
            <person name="Vallenet D."/>
            <person name="Cruveiller S."/>
            <person name="Rouy Z."/>
            <person name="Barbe V."/>
            <person name="Acosta C."/>
            <person name="Cattolico L."/>
            <person name="Jubin C."/>
            <person name="Lajus A."/>
            <person name="Segurens B."/>
            <person name="Vacherie B."/>
            <person name="Wincker P."/>
            <person name="Weissenbach J."/>
            <person name="Lemaitre B."/>
            <person name="Medigue C."/>
            <person name="Boccard F."/>
        </authorList>
    </citation>
    <scope>NUCLEOTIDE SEQUENCE [LARGE SCALE GENOMIC DNA]</scope>
    <source>
        <strain>L48</strain>
    </source>
</reference>
<dbReference type="EC" id="3.1.3.11" evidence="1"/>
<dbReference type="EMBL" id="CT573326">
    <property type="protein sequence ID" value="CAK17736.1"/>
    <property type="molecule type" value="Genomic_DNA"/>
</dbReference>
<dbReference type="RefSeq" id="WP_011536096.1">
    <property type="nucleotide sequence ID" value="NC_008027.1"/>
</dbReference>
<dbReference type="SMR" id="Q1I3Q0"/>
<dbReference type="STRING" id="384676.PSEEN5106"/>
<dbReference type="GeneID" id="32808041"/>
<dbReference type="KEGG" id="pen:PSEEN5106"/>
<dbReference type="eggNOG" id="COG0158">
    <property type="taxonomic scope" value="Bacteria"/>
</dbReference>
<dbReference type="HOGENOM" id="CLU_039977_0_0_6"/>
<dbReference type="OrthoDB" id="9806756at2"/>
<dbReference type="UniPathway" id="UPA00138"/>
<dbReference type="Proteomes" id="UP000000658">
    <property type="component" value="Chromosome"/>
</dbReference>
<dbReference type="GO" id="GO:0005829">
    <property type="term" value="C:cytosol"/>
    <property type="evidence" value="ECO:0007669"/>
    <property type="project" value="TreeGrafter"/>
</dbReference>
<dbReference type="GO" id="GO:0042132">
    <property type="term" value="F:fructose 1,6-bisphosphate 1-phosphatase activity"/>
    <property type="evidence" value="ECO:0007669"/>
    <property type="project" value="UniProtKB-UniRule"/>
</dbReference>
<dbReference type="GO" id="GO:0000287">
    <property type="term" value="F:magnesium ion binding"/>
    <property type="evidence" value="ECO:0007669"/>
    <property type="project" value="UniProtKB-UniRule"/>
</dbReference>
<dbReference type="GO" id="GO:0030388">
    <property type="term" value="P:fructose 1,6-bisphosphate metabolic process"/>
    <property type="evidence" value="ECO:0007669"/>
    <property type="project" value="TreeGrafter"/>
</dbReference>
<dbReference type="GO" id="GO:0006002">
    <property type="term" value="P:fructose 6-phosphate metabolic process"/>
    <property type="evidence" value="ECO:0007669"/>
    <property type="project" value="TreeGrafter"/>
</dbReference>
<dbReference type="GO" id="GO:0006000">
    <property type="term" value="P:fructose metabolic process"/>
    <property type="evidence" value="ECO:0007669"/>
    <property type="project" value="TreeGrafter"/>
</dbReference>
<dbReference type="GO" id="GO:0006094">
    <property type="term" value="P:gluconeogenesis"/>
    <property type="evidence" value="ECO:0007669"/>
    <property type="project" value="UniProtKB-UniRule"/>
</dbReference>
<dbReference type="GO" id="GO:0005986">
    <property type="term" value="P:sucrose biosynthetic process"/>
    <property type="evidence" value="ECO:0007669"/>
    <property type="project" value="TreeGrafter"/>
</dbReference>
<dbReference type="CDD" id="cd00354">
    <property type="entry name" value="FBPase"/>
    <property type="match status" value="1"/>
</dbReference>
<dbReference type="FunFam" id="3.30.540.10:FF:000006">
    <property type="entry name" value="Fructose-1,6-bisphosphatase class 1"/>
    <property type="match status" value="1"/>
</dbReference>
<dbReference type="FunFam" id="3.40.190.80:FF:000011">
    <property type="entry name" value="Fructose-1,6-bisphosphatase class 1"/>
    <property type="match status" value="1"/>
</dbReference>
<dbReference type="Gene3D" id="3.40.190.80">
    <property type="match status" value="1"/>
</dbReference>
<dbReference type="Gene3D" id="3.30.540.10">
    <property type="entry name" value="Fructose-1,6-Bisphosphatase, subunit A, domain 1"/>
    <property type="match status" value="1"/>
</dbReference>
<dbReference type="HAMAP" id="MF_01855">
    <property type="entry name" value="FBPase_class1"/>
    <property type="match status" value="1"/>
</dbReference>
<dbReference type="InterPro" id="IPR044015">
    <property type="entry name" value="FBPase_C_dom"/>
</dbReference>
<dbReference type="InterPro" id="IPR000146">
    <property type="entry name" value="FBPase_class-1"/>
</dbReference>
<dbReference type="InterPro" id="IPR033391">
    <property type="entry name" value="FBPase_N"/>
</dbReference>
<dbReference type="InterPro" id="IPR028343">
    <property type="entry name" value="FBPtase"/>
</dbReference>
<dbReference type="NCBIfam" id="NF006778">
    <property type="entry name" value="PRK09293.1-1"/>
    <property type="match status" value="1"/>
</dbReference>
<dbReference type="NCBIfam" id="NF006779">
    <property type="entry name" value="PRK09293.1-3"/>
    <property type="match status" value="1"/>
</dbReference>
<dbReference type="NCBIfam" id="NF006780">
    <property type="entry name" value="PRK09293.1-4"/>
    <property type="match status" value="1"/>
</dbReference>
<dbReference type="PANTHER" id="PTHR11556">
    <property type="entry name" value="FRUCTOSE-1,6-BISPHOSPHATASE-RELATED"/>
    <property type="match status" value="1"/>
</dbReference>
<dbReference type="PANTHER" id="PTHR11556:SF35">
    <property type="entry name" value="SEDOHEPTULOSE-1,7-BISPHOSPHATASE, CHLOROPLASTIC"/>
    <property type="match status" value="1"/>
</dbReference>
<dbReference type="Pfam" id="PF00316">
    <property type="entry name" value="FBPase"/>
    <property type="match status" value="1"/>
</dbReference>
<dbReference type="Pfam" id="PF18913">
    <property type="entry name" value="FBPase_C"/>
    <property type="match status" value="1"/>
</dbReference>
<dbReference type="PIRSF" id="PIRSF500210">
    <property type="entry name" value="FBPtase"/>
    <property type="match status" value="1"/>
</dbReference>
<dbReference type="PIRSF" id="PIRSF000904">
    <property type="entry name" value="FBPtase_SBPase"/>
    <property type="match status" value="1"/>
</dbReference>
<dbReference type="PRINTS" id="PR00115">
    <property type="entry name" value="F16BPHPHTASE"/>
</dbReference>
<dbReference type="SUPFAM" id="SSF56655">
    <property type="entry name" value="Carbohydrate phosphatase"/>
    <property type="match status" value="1"/>
</dbReference>
<comment type="catalytic activity">
    <reaction evidence="1">
        <text>beta-D-fructose 1,6-bisphosphate + H2O = beta-D-fructose 6-phosphate + phosphate</text>
        <dbReference type="Rhea" id="RHEA:11064"/>
        <dbReference type="ChEBI" id="CHEBI:15377"/>
        <dbReference type="ChEBI" id="CHEBI:32966"/>
        <dbReference type="ChEBI" id="CHEBI:43474"/>
        <dbReference type="ChEBI" id="CHEBI:57634"/>
        <dbReference type="EC" id="3.1.3.11"/>
    </reaction>
</comment>
<comment type="cofactor">
    <cofactor evidence="1">
        <name>Mg(2+)</name>
        <dbReference type="ChEBI" id="CHEBI:18420"/>
    </cofactor>
    <text evidence="1">Binds 2 magnesium ions per subunit.</text>
</comment>
<comment type="pathway">
    <text evidence="1">Carbohydrate biosynthesis; gluconeogenesis.</text>
</comment>
<comment type="subunit">
    <text evidence="1">Homotetramer.</text>
</comment>
<comment type="subcellular location">
    <subcellularLocation>
        <location evidence="1">Cytoplasm</location>
    </subcellularLocation>
</comment>
<comment type="similarity">
    <text evidence="1">Belongs to the FBPase class 1 family.</text>
</comment>
<sequence length="336" mass="37160">MSRVTLSRYLIEQTRSNNTPADLRFLIEVVARACKEISHHVSKGALGGVLGSMGTENVQGEVQKKLDVISNDILLEANEWGGHLAGMASEEMDNAYQIPGKYPKGAYLLVFDPLDGSSNIDVNVSVGTIFSVLRCPNQYLSQNESLNEAAFLQPGTEQVAAGYAIYGPQTMLILTLGNGVKGFTLDRELGSFVLTHENIRVPETTAEFAINMSNQRHWEAPVQRYVGELLAGETGPLKKNYNMRWIASMVADVHRILTRGGLFMYPRDAREPSKPGKLRLMYEANPMSFIIEQAGGASTNGYDRILDIKPESLHQRVSVILGSKEEVERVTAYHKE</sequence>
<gene>
    <name evidence="1" type="primary">fbp</name>
    <name type="ordered locus">PSEEN5106</name>
</gene>
<name>F16PA_PSEE4</name>